<feature type="chain" id="PRO_1000072647" description="Ribosomal RNA small subunit methyltransferase A">
    <location>
        <begin position="1"/>
        <end position="285"/>
    </location>
</feature>
<feature type="binding site" evidence="1">
    <location>
        <position position="11"/>
    </location>
    <ligand>
        <name>S-adenosyl-L-methionine</name>
        <dbReference type="ChEBI" id="CHEBI:59789"/>
    </ligand>
</feature>
<feature type="binding site" evidence="1">
    <location>
        <position position="13"/>
    </location>
    <ligand>
        <name>S-adenosyl-L-methionine</name>
        <dbReference type="ChEBI" id="CHEBI:59789"/>
    </ligand>
</feature>
<feature type="binding site" evidence="1">
    <location>
        <position position="37"/>
    </location>
    <ligand>
        <name>S-adenosyl-L-methionine</name>
        <dbReference type="ChEBI" id="CHEBI:59789"/>
    </ligand>
</feature>
<feature type="binding site" evidence="1">
    <location>
        <position position="57"/>
    </location>
    <ligand>
        <name>S-adenosyl-L-methionine</name>
        <dbReference type="ChEBI" id="CHEBI:59789"/>
    </ligand>
</feature>
<feature type="binding site" evidence="1">
    <location>
        <position position="85"/>
    </location>
    <ligand>
        <name>S-adenosyl-L-methionine</name>
        <dbReference type="ChEBI" id="CHEBI:59789"/>
    </ligand>
</feature>
<feature type="binding site" evidence="1">
    <location>
        <position position="105"/>
    </location>
    <ligand>
        <name>S-adenosyl-L-methionine</name>
        <dbReference type="ChEBI" id="CHEBI:59789"/>
    </ligand>
</feature>
<accession>A7GVW6</accession>
<name>RSMA_CAMC5</name>
<sequence length="285" mass="32157">MIRAKKHFGQNFLQDEAVLNKIIQAIPKDTQNIVEIGPGLGDLTFKILQICSVTAYEIDSELFALLGKKFAKEVQNGRLKLFCKDALEKWDEGGVSEQGYFLVANLPYYVATKMILSAIDDEKCRGLVVMIQREVALKFSAKSGESEFSSLAILANLQGSCELLFDVSAQCFNPPPKVVSSVIKIQKSKILLGESGIFKDKFEYEKFKIFLKIAFASPRKTLMKNLSAKFDKFELNTLFAELNLSPAIRPHELNVELYLKIFENLKEDNERQKRRKSGSLAGQEQ</sequence>
<evidence type="ECO:0000255" key="1">
    <source>
        <dbReference type="HAMAP-Rule" id="MF_00607"/>
    </source>
</evidence>
<reference key="1">
    <citation type="submission" date="2007-07" db="EMBL/GenBank/DDBJ databases">
        <title>Genome sequence of Campylobacter curvus 525.92 isolated from human feces.</title>
        <authorList>
            <person name="Fouts D.E."/>
            <person name="Mongodin E.F."/>
            <person name="Puiu D."/>
            <person name="Sebastian Y."/>
            <person name="Miller W.G."/>
            <person name="Mandrell R.E."/>
            <person name="Lastovica A.J."/>
            <person name="Nelson K.E."/>
        </authorList>
    </citation>
    <scope>NUCLEOTIDE SEQUENCE [LARGE SCALE GENOMIC DNA]</scope>
    <source>
        <strain>525.92</strain>
    </source>
</reference>
<organism>
    <name type="scientific">Campylobacter curvus (strain 525.92)</name>
    <dbReference type="NCBI Taxonomy" id="360105"/>
    <lineage>
        <taxon>Bacteria</taxon>
        <taxon>Pseudomonadati</taxon>
        <taxon>Campylobacterota</taxon>
        <taxon>Epsilonproteobacteria</taxon>
        <taxon>Campylobacterales</taxon>
        <taxon>Campylobacteraceae</taxon>
        <taxon>Campylobacter</taxon>
    </lineage>
</organism>
<comment type="function">
    <text evidence="1">Specifically dimethylates two adjacent adenosines (A1518 and A1519) in the loop of a conserved hairpin near the 3'-end of 16S rRNA in the 30S particle. May play a critical role in biogenesis of 30S subunits.</text>
</comment>
<comment type="catalytic activity">
    <reaction evidence="1">
        <text>adenosine(1518)/adenosine(1519) in 16S rRNA + 4 S-adenosyl-L-methionine = N(6)-dimethyladenosine(1518)/N(6)-dimethyladenosine(1519) in 16S rRNA + 4 S-adenosyl-L-homocysteine + 4 H(+)</text>
        <dbReference type="Rhea" id="RHEA:19609"/>
        <dbReference type="Rhea" id="RHEA-COMP:10232"/>
        <dbReference type="Rhea" id="RHEA-COMP:10233"/>
        <dbReference type="ChEBI" id="CHEBI:15378"/>
        <dbReference type="ChEBI" id="CHEBI:57856"/>
        <dbReference type="ChEBI" id="CHEBI:59789"/>
        <dbReference type="ChEBI" id="CHEBI:74411"/>
        <dbReference type="ChEBI" id="CHEBI:74493"/>
        <dbReference type="EC" id="2.1.1.182"/>
    </reaction>
</comment>
<comment type="subcellular location">
    <subcellularLocation>
        <location evidence="1">Cytoplasm</location>
    </subcellularLocation>
</comment>
<comment type="similarity">
    <text evidence="1">Belongs to the class I-like SAM-binding methyltransferase superfamily. rRNA adenine N(6)-methyltransferase family. RsmA subfamily.</text>
</comment>
<protein>
    <recommendedName>
        <fullName evidence="1">Ribosomal RNA small subunit methyltransferase A</fullName>
        <ecNumber evidence="1">2.1.1.182</ecNumber>
    </recommendedName>
    <alternativeName>
        <fullName evidence="1">16S rRNA (adenine(1518)-N(6)/adenine(1519)-N(6))-dimethyltransferase</fullName>
    </alternativeName>
    <alternativeName>
        <fullName evidence="1">16S rRNA dimethyladenosine transferase</fullName>
    </alternativeName>
    <alternativeName>
        <fullName evidence="1">16S rRNA dimethylase</fullName>
    </alternativeName>
    <alternativeName>
        <fullName evidence="1">S-adenosylmethionine-6-N', N'-adenosyl(rRNA) dimethyltransferase</fullName>
    </alternativeName>
</protein>
<proteinExistence type="inferred from homology"/>
<dbReference type="EC" id="2.1.1.182" evidence="1"/>
<dbReference type="EMBL" id="CP000767">
    <property type="protein sequence ID" value="EAT99787.1"/>
    <property type="molecule type" value="Genomic_DNA"/>
</dbReference>
<dbReference type="RefSeq" id="WP_011991653.1">
    <property type="nucleotide sequence ID" value="NC_009715.2"/>
</dbReference>
<dbReference type="SMR" id="A7GVW6"/>
<dbReference type="STRING" id="360105.CCV52592_1116"/>
<dbReference type="KEGG" id="ccv:CCV52592_1116"/>
<dbReference type="HOGENOM" id="CLU_041220_0_2_7"/>
<dbReference type="OrthoDB" id="9814755at2"/>
<dbReference type="Proteomes" id="UP000006380">
    <property type="component" value="Chromosome"/>
</dbReference>
<dbReference type="GO" id="GO:0005829">
    <property type="term" value="C:cytosol"/>
    <property type="evidence" value="ECO:0007669"/>
    <property type="project" value="TreeGrafter"/>
</dbReference>
<dbReference type="GO" id="GO:0052908">
    <property type="term" value="F:16S rRNA (adenine(1518)-N(6)/adenine(1519)-N(6))-dimethyltransferase activity"/>
    <property type="evidence" value="ECO:0007669"/>
    <property type="project" value="UniProtKB-EC"/>
</dbReference>
<dbReference type="GO" id="GO:0003723">
    <property type="term" value="F:RNA binding"/>
    <property type="evidence" value="ECO:0007669"/>
    <property type="project" value="UniProtKB-KW"/>
</dbReference>
<dbReference type="Gene3D" id="1.10.8.100">
    <property type="entry name" value="Ribosomal RNA adenine dimethylase-like, domain 2"/>
    <property type="match status" value="1"/>
</dbReference>
<dbReference type="Gene3D" id="3.40.50.150">
    <property type="entry name" value="Vaccinia Virus protein VP39"/>
    <property type="match status" value="1"/>
</dbReference>
<dbReference type="HAMAP" id="MF_00607">
    <property type="entry name" value="16SrRNA_methyltr_A"/>
    <property type="match status" value="1"/>
</dbReference>
<dbReference type="InterPro" id="IPR001737">
    <property type="entry name" value="KsgA/Erm"/>
</dbReference>
<dbReference type="InterPro" id="IPR023165">
    <property type="entry name" value="rRNA_Ade_diMease-like_C"/>
</dbReference>
<dbReference type="InterPro" id="IPR020596">
    <property type="entry name" value="rRNA_Ade_Mease_Trfase_CS"/>
</dbReference>
<dbReference type="InterPro" id="IPR020598">
    <property type="entry name" value="rRNA_Ade_methylase_Trfase_N"/>
</dbReference>
<dbReference type="InterPro" id="IPR011530">
    <property type="entry name" value="rRNA_adenine_dimethylase"/>
</dbReference>
<dbReference type="InterPro" id="IPR029063">
    <property type="entry name" value="SAM-dependent_MTases_sf"/>
</dbReference>
<dbReference type="NCBIfam" id="TIGR00755">
    <property type="entry name" value="ksgA"/>
    <property type="match status" value="1"/>
</dbReference>
<dbReference type="PANTHER" id="PTHR11727">
    <property type="entry name" value="DIMETHYLADENOSINE TRANSFERASE"/>
    <property type="match status" value="1"/>
</dbReference>
<dbReference type="PANTHER" id="PTHR11727:SF7">
    <property type="entry name" value="DIMETHYLADENOSINE TRANSFERASE-RELATED"/>
    <property type="match status" value="1"/>
</dbReference>
<dbReference type="Pfam" id="PF00398">
    <property type="entry name" value="RrnaAD"/>
    <property type="match status" value="1"/>
</dbReference>
<dbReference type="SMART" id="SM00650">
    <property type="entry name" value="rADc"/>
    <property type="match status" value="1"/>
</dbReference>
<dbReference type="SUPFAM" id="SSF53335">
    <property type="entry name" value="S-adenosyl-L-methionine-dependent methyltransferases"/>
    <property type="match status" value="1"/>
</dbReference>
<dbReference type="PROSITE" id="PS01131">
    <property type="entry name" value="RRNA_A_DIMETH"/>
    <property type="match status" value="1"/>
</dbReference>
<dbReference type="PROSITE" id="PS51689">
    <property type="entry name" value="SAM_RNA_A_N6_MT"/>
    <property type="match status" value="1"/>
</dbReference>
<keyword id="KW-0963">Cytoplasm</keyword>
<keyword id="KW-0489">Methyltransferase</keyword>
<keyword id="KW-1185">Reference proteome</keyword>
<keyword id="KW-0694">RNA-binding</keyword>
<keyword id="KW-0698">rRNA processing</keyword>
<keyword id="KW-0949">S-adenosyl-L-methionine</keyword>
<keyword id="KW-0808">Transferase</keyword>
<gene>
    <name evidence="1" type="primary">rsmA</name>
    <name evidence="1" type="synonym">ksgA</name>
    <name type="ordered locus">Ccur92_00540</name>
    <name type="ORF">CCV52592_1116</name>
</gene>